<dbReference type="EC" id="2.3.1.191" evidence="1"/>
<dbReference type="EMBL" id="CP001227">
    <property type="protein sequence ID" value="ACR47026.1"/>
    <property type="molecule type" value="Genomic_DNA"/>
</dbReference>
<dbReference type="RefSeq" id="WP_012736337.1">
    <property type="nucleotide sequence ID" value="NC_012730.1"/>
</dbReference>
<dbReference type="SMR" id="C4K0C3"/>
<dbReference type="KEGG" id="rpk:RPR_00045"/>
<dbReference type="HOGENOM" id="CLU_049865_0_0_5"/>
<dbReference type="UniPathway" id="UPA00973"/>
<dbReference type="Proteomes" id="UP000005015">
    <property type="component" value="Chromosome"/>
</dbReference>
<dbReference type="GO" id="GO:0016020">
    <property type="term" value="C:membrane"/>
    <property type="evidence" value="ECO:0007669"/>
    <property type="project" value="GOC"/>
</dbReference>
<dbReference type="GO" id="GO:0016410">
    <property type="term" value="F:N-acyltransferase activity"/>
    <property type="evidence" value="ECO:0007669"/>
    <property type="project" value="InterPro"/>
</dbReference>
<dbReference type="GO" id="GO:0009245">
    <property type="term" value="P:lipid A biosynthetic process"/>
    <property type="evidence" value="ECO:0007669"/>
    <property type="project" value="UniProtKB-UniRule"/>
</dbReference>
<dbReference type="CDD" id="cd03352">
    <property type="entry name" value="LbH_LpxD"/>
    <property type="match status" value="1"/>
</dbReference>
<dbReference type="Gene3D" id="2.160.10.10">
    <property type="entry name" value="Hexapeptide repeat proteins"/>
    <property type="match status" value="1"/>
</dbReference>
<dbReference type="Gene3D" id="3.40.1390.10">
    <property type="entry name" value="MurE/MurF, N-terminal domain"/>
    <property type="match status" value="1"/>
</dbReference>
<dbReference type="HAMAP" id="MF_00523">
    <property type="entry name" value="LpxD"/>
    <property type="match status" value="1"/>
</dbReference>
<dbReference type="InterPro" id="IPR001451">
    <property type="entry name" value="Hexapep"/>
</dbReference>
<dbReference type="InterPro" id="IPR018357">
    <property type="entry name" value="Hexapep_transf_CS"/>
</dbReference>
<dbReference type="InterPro" id="IPR007691">
    <property type="entry name" value="LpxD"/>
</dbReference>
<dbReference type="InterPro" id="IPR011004">
    <property type="entry name" value="Trimer_LpxA-like_sf"/>
</dbReference>
<dbReference type="InterPro" id="IPR020573">
    <property type="entry name" value="UDP_GlcNAc_AcTrfase_non-rep"/>
</dbReference>
<dbReference type="NCBIfam" id="TIGR01853">
    <property type="entry name" value="lipid_A_lpxD"/>
    <property type="match status" value="1"/>
</dbReference>
<dbReference type="NCBIfam" id="NF002060">
    <property type="entry name" value="PRK00892.1"/>
    <property type="match status" value="1"/>
</dbReference>
<dbReference type="PANTHER" id="PTHR43378">
    <property type="entry name" value="UDP-3-O-ACYLGLUCOSAMINE N-ACYLTRANSFERASE"/>
    <property type="match status" value="1"/>
</dbReference>
<dbReference type="PANTHER" id="PTHR43378:SF2">
    <property type="entry name" value="UDP-3-O-ACYLGLUCOSAMINE N-ACYLTRANSFERASE 1, MITOCHONDRIAL-RELATED"/>
    <property type="match status" value="1"/>
</dbReference>
<dbReference type="Pfam" id="PF00132">
    <property type="entry name" value="Hexapep"/>
    <property type="match status" value="1"/>
</dbReference>
<dbReference type="Pfam" id="PF04613">
    <property type="entry name" value="LpxD"/>
    <property type="match status" value="1"/>
</dbReference>
<dbReference type="SUPFAM" id="SSF51161">
    <property type="entry name" value="Trimeric LpxA-like enzymes"/>
    <property type="match status" value="1"/>
</dbReference>
<dbReference type="PROSITE" id="PS00101">
    <property type="entry name" value="HEXAPEP_TRANSFERASES"/>
    <property type="match status" value="2"/>
</dbReference>
<organism>
    <name type="scientific">Rickettsia peacockii (strain Rustic)</name>
    <dbReference type="NCBI Taxonomy" id="562019"/>
    <lineage>
        <taxon>Bacteria</taxon>
        <taxon>Pseudomonadati</taxon>
        <taxon>Pseudomonadota</taxon>
        <taxon>Alphaproteobacteria</taxon>
        <taxon>Rickettsiales</taxon>
        <taxon>Rickettsiaceae</taxon>
        <taxon>Rickettsieae</taxon>
        <taxon>Rickettsia</taxon>
        <taxon>spotted fever group</taxon>
    </lineage>
</organism>
<accession>C4K0C3</accession>
<name>LPXD_RICPU</name>
<sequence>MVSSNFYKNLGPRKLTAIIDFLHDIIAPPKIHEDIAIHDIKILQEASPNDISFLSNPKYSEFLKTTKAAACIVPKNFTGEANPNTVLLHAQNSYFAYSKLIDFFYAPIKSYPTKIMKSAIVADSATIGKNCYIGHNVVIEDDVIIGDNSIIEAGSFIGRGVNIGRNARIEQHVSINYAIIGDDVVILAGAKIGQDGFGFSTEKGVHHKIFHIGIVKIGNNVEIGANTTIDRGSLQDTIIKDLCRIDNLVQIGHGVKIGKGSIIVAQTGIAGSSTIGKYCALGGQVGIAGHLNIGDGAQVAAQGGVAQNIEAGKIVGGSPAIPIMDWHRQSIIMKQLLKTSNSKLKK</sequence>
<reference key="1">
    <citation type="journal article" date="2009" name="PLoS ONE">
        <title>Genome sequence of the endosymbiont Rickettsia peacockii and comparison with virulent Rickettsia rickettsii: identification of virulence factors.</title>
        <authorList>
            <person name="Felsheim R.F."/>
            <person name="Kurtti T.J."/>
            <person name="Munderloh U.G."/>
        </authorList>
    </citation>
    <scope>NUCLEOTIDE SEQUENCE [LARGE SCALE GENOMIC DNA]</scope>
    <source>
        <strain>Rustic</strain>
    </source>
</reference>
<feature type="chain" id="PRO_1000211754" description="UDP-3-O-acylglucosamine N-acyltransferase">
    <location>
        <begin position="1"/>
        <end position="346"/>
    </location>
</feature>
<feature type="active site" description="Proton acceptor" evidence="1">
    <location>
        <position position="253"/>
    </location>
</feature>
<gene>
    <name evidence="1" type="primary">lpxD</name>
    <name type="ordered locus">RPR_00045</name>
</gene>
<comment type="function">
    <text evidence="1">Catalyzes the N-acylation of UDP-3-O-acylglucosamine using 3-hydroxyacyl-ACP as the acyl donor. Is involved in the biosynthesis of lipid A, a phosphorylated glycolipid that anchors the lipopolysaccharide to the outer membrane of the cell.</text>
</comment>
<comment type="catalytic activity">
    <reaction evidence="1">
        <text>a UDP-3-O-[(3R)-3-hydroxyacyl]-alpha-D-glucosamine + a (3R)-hydroxyacyl-[ACP] = a UDP-2-N,3-O-bis[(3R)-3-hydroxyacyl]-alpha-D-glucosamine + holo-[ACP] + H(+)</text>
        <dbReference type="Rhea" id="RHEA:53836"/>
        <dbReference type="Rhea" id="RHEA-COMP:9685"/>
        <dbReference type="Rhea" id="RHEA-COMP:9945"/>
        <dbReference type="ChEBI" id="CHEBI:15378"/>
        <dbReference type="ChEBI" id="CHEBI:64479"/>
        <dbReference type="ChEBI" id="CHEBI:78827"/>
        <dbReference type="ChEBI" id="CHEBI:137740"/>
        <dbReference type="ChEBI" id="CHEBI:137748"/>
        <dbReference type="EC" id="2.3.1.191"/>
    </reaction>
</comment>
<comment type="pathway">
    <text evidence="1">Bacterial outer membrane biogenesis; LPS lipid A biosynthesis.</text>
</comment>
<comment type="subunit">
    <text evidence="1">Homotrimer.</text>
</comment>
<comment type="similarity">
    <text evidence="1">Belongs to the transferase hexapeptide repeat family. LpxD subfamily.</text>
</comment>
<proteinExistence type="inferred from homology"/>
<evidence type="ECO:0000255" key="1">
    <source>
        <dbReference type="HAMAP-Rule" id="MF_00523"/>
    </source>
</evidence>
<protein>
    <recommendedName>
        <fullName evidence="1">UDP-3-O-acylglucosamine N-acyltransferase</fullName>
        <ecNumber evidence="1">2.3.1.191</ecNumber>
    </recommendedName>
</protein>
<keyword id="KW-0012">Acyltransferase</keyword>
<keyword id="KW-0441">Lipid A biosynthesis</keyword>
<keyword id="KW-0444">Lipid biosynthesis</keyword>
<keyword id="KW-0443">Lipid metabolism</keyword>
<keyword id="KW-0677">Repeat</keyword>
<keyword id="KW-0808">Transferase</keyword>